<reference key="1">
    <citation type="journal article" date="2006" name="Nature">
        <title>Analysis of the DNA sequence and duplication history of human chromosome 15.</title>
        <authorList>
            <person name="Zody M.C."/>
            <person name="Garber M."/>
            <person name="Sharpe T."/>
            <person name="Young S.K."/>
            <person name="Rowen L."/>
            <person name="O'Neill K."/>
            <person name="Whittaker C.A."/>
            <person name="Kamal M."/>
            <person name="Chang J.L."/>
            <person name="Cuomo C.A."/>
            <person name="Dewar K."/>
            <person name="FitzGerald M.G."/>
            <person name="Kodira C.D."/>
            <person name="Madan A."/>
            <person name="Qin S."/>
            <person name="Yang X."/>
            <person name="Abbasi N."/>
            <person name="Abouelleil A."/>
            <person name="Arachchi H.M."/>
            <person name="Baradarani L."/>
            <person name="Birditt B."/>
            <person name="Bloom S."/>
            <person name="Bloom T."/>
            <person name="Borowsky M.L."/>
            <person name="Burke J."/>
            <person name="Butler J."/>
            <person name="Cook A."/>
            <person name="DeArellano K."/>
            <person name="DeCaprio D."/>
            <person name="Dorris L. III"/>
            <person name="Dors M."/>
            <person name="Eichler E.E."/>
            <person name="Engels R."/>
            <person name="Fahey J."/>
            <person name="Fleetwood P."/>
            <person name="Friedman C."/>
            <person name="Gearin G."/>
            <person name="Hall J.L."/>
            <person name="Hensley G."/>
            <person name="Johnson E."/>
            <person name="Jones C."/>
            <person name="Kamat A."/>
            <person name="Kaur A."/>
            <person name="Locke D.P."/>
            <person name="Madan A."/>
            <person name="Munson G."/>
            <person name="Jaffe D.B."/>
            <person name="Lui A."/>
            <person name="Macdonald P."/>
            <person name="Mauceli E."/>
            <person name="Naylor J.W."/>
            <person name="Nesbitt R."/>
            <person name="Nicol R."/>
            <person name="O'Leary S.B."/>
            <person name="Ratcliffe A."/>
            <person name="Rounsley S."/>
            <person name="She X."/>
            <person name="Sneddon K.M.B."/>
            <person name="Stewart S."/>
            <person name="Sougnez C."/>
            <person name="Stone S.M."/>
            <person name="Topham K."/>
            <person name="Vincent D."/>
            <person name="Wang S."/>
            <person name="Zimmer A.R."/>
            <person name="Birren B.W."/>
            <person name="Hood L."/>
            <person name="Lander E.S."/>
            <person name="Nusbaum C."/>
        </authorList>
    </citation>
    <scope>NUCLEOTIDE SEQUENCE [LARGE SCALE GENOMIC DNA]</scope>
</reference>
<keyword id="KW-0175">Coiled coil</keyword>
<keyword id="KW-1185">Reference proteome</keyword>
<name>GG6LZ_HUMAN</name>
<feature type="chain" id="PRO_0000457100" description="Golgin subfamily A member 6-like protein 26">
    <location>
        <begin position="1"/>
        <end position="649"/>
    </location>
</feature>
<feature type="region of interest" description="Disordered" evidence="2">
    <location>
        <begin position="1"/>
        <end position="94"/>
    </location>
</feature>
<feature type="region of interest" description="Disordered" evidence="2">
    <location>
        <begin position="300"/>
        <end position="330"/>
    </location>
</feature>
<feature type="region of interest" description="Disordered" evidence="2">
    <location>
        <begin position="358"/>
        <end position="440"/>
    </location>
</feature>
<feature type="region of interest" description="Disordered" evidence="2">
    <location>
        <begin position="455"/>
        <end position="572"/>
    </location>
</feature>
<feature type="region of interest" description="Disordered" evidence="2">
    <location>
        <begin position="584"/>
        <end position="620"/>
    </location>
</feature>
<feature type="coiled-coil region" evidence="1">
    <location>
        <begin position="151"/>
        <end position="644"/>
    </location>
</feature>
<feature type="compositionally biased region" description="Low complexity" evidence="2">
    <location>
        <begin position="10"/>
        <end position="23"/>
    </location>
</feature>
<feature type="compositionally biased region" description="Basic and acidic residues" evidence="2">
    <location>
        <begin position="25"/>
        <end position="46"/>
    </location>
</feature>
<feature type="compositionally biased region" description="Polar residues" evidence="2">
    <location>
        <begin position="47"/>
        <end position="57"/>
    </location>
</feature>
<feature type="compositionally biased region" description="Polar residues" evidence="2">
    <location>
        <begin position="65"/>
        <end position="77"/>
    </location>
</feature>
<feature type="compositionally biased region" description="Basic and acidic residues" evidence="2">
    <location>
        <begin position="80"/>
        <end position="94"/>
    </location>
</feature>
<sequence length="649" mass="81007">MWPQPHLPTHPHLPTHPHLPTHPMMSKETRQSKLAEAKEQLTDHHPQTNPSVGTAASDTKKKKINNGTNPETTTSGGCHSPEDEQKASHQHQEALRRELEAQVHTIRILTCQKTELQMALYYSQHAVKQLEGEARDLISRLHDSWKFAGELEQALSAVATQKKKADRYIEELTKERDALSLELYRNTITDEELKEKNAKLQEKLQLVESEKSEIQLNVKELKRKLERAKLLLPQQQLQAEADHLGKELQSVSAKLQAQVEENELWNRLNQQQEEKMWRQEEKIQEWEEKIQEQEEKIREQEEKIREQEEKMRRQEEMMWEKEEKMRRQEEMMWEKEEKMRRLEEMMWEKEEKIRELEEKMHEQEKIREQEEKRQEEEKIREQEKRQEQEAKMWRQEEKIREQEEKIREQEKKMWRQEEKIHEQEKIREEEKRQEQEEMWRQEEKIREQEEIWRQKEKMHEQEKIRKQEEKVWRQEEKMHDQEEKIREQEEKMWRQEEKIREQEEKIREQEEKIREQEEKIREQEEMMQEQEEKMGEQEEKMQEQEKMRRQEEKIREQEEKIREQKEKIREQEEKIWEQEEKIREQEEMMQEQEEKMWEQEEKMCEQEEKMQEQEEKMRRQEEKMWEQEVRLRQQEEKMQEHQEHLEAAI</sequence>
<gene>
    <name type="primary">GOLGA6L26</name>
</gene>
<accession>P0DX02</accession>
<proteinExistence type="inferred from homology"/>
<organism>
    <name type="scientific">Homo sapiens</name>
    <name type="common">Human</name>
    <dbReference type="NCBI Taxonomy" id="9606"/>
    <lineage>
        <taxon>Eukaryota</taxon>
        <taxon>Metazoa</taxon>
        <taxon>Chordata</taxon>
        <taxon>Craniata</taxon>
        <taxon>Vertebrata</taxon>
        <taxon>Euteleostomi</taxon>
        <taxon>Mammalia</taxon>
        <taxon>Eutheria</taxon>
        <taxon>Euarchontoglires</taxon>
        <taxon>Primates</taxon>
        <taxon>Haplorrhini</taxon>
        <taxon>Catarrhini</taxon>
        <taxon>Hominidae</taxon>
        <taxon>Homo</taxon>
    </lineage>
</organism>
<protein>
    <recommendedName>
        <fullName>Golgin subfamily A member 6-like protein 26</fullName>
    </recommendedName>
</protein>
<comment type="similarity">
    <text evidence="3">Belongs to the GOLGA6 family.</text>
</comment>
<evidence type="ECO:0000255" key="1"/>
<evidence type="ECO:0000256" key="2">
    <source>
        <dbReference type="SAM" id="MobiDB-lite"/>
    </source>
</evidence>
<evidence type="ECO:0000305" key="3"/>
<dbReference type="EMBL" id="AC100756">
    <property type="status" value="NOT_ANNOTATED_CDS"/>
    <property type="molecule type" value="Genomic_DNA"/>
</dbReference>
<dbReference type="EMBL" id="AC203659">
    <property type="status" value="NOT_ANNOTATED_CDS"/>
    <property type="molecule type" value="Genomic_DNA"/>
</dbReference>
<dbReference type="CCDS" id="CCDS91963.1"/>
<dbReference type="RefSeq" id="NP_001369375.2">
    <property type="nucleotide sequence ID" value="NM_001382446.2"/>
</dbReference>
<dbReference type="SMR" id="P0DX02"/>
<dbReference type="PeptideAtlas" id="P0DX02"/>
<dbReference type="Ensembl" id="ENST00000618455.5">
    <property type="protein sequence ID" value="ENSP00000508569.1"/>
    <property type="gene ID" value="ENSG00000273756.5"/>
</dbReference>
<dbReference type="GeneID" id="102723623"/>
<dbReference type="MANE-Select" id="ENST00000618455.5">
    <property type="protein sequence ID" value="ENSP00000508569.1"/>
    <property type="RefSeq nucleotide sequence ID" value="NM_001382446.2"/>
    <property type="RefSeq protein sequence ID" value="NP_001369375.2"/>
</dbReference>
<dbReference type="AGR" id="HGNC:56306"/>
<dbReference type="GeneCards" id="GOLGA6L26"/>
<dbReference type="HGNC" id="HGNC:56306">
    <property type="gene designation" value="GOLGA6L26"/>
</dbReference>
<dbReference type="GeneTree" id="ENSGT00940000163338"/>
<dbReference type="PRO" id="PR:P0DX02"/>
<dbReference type="Proteomes" id="UP000005640">
    <property type="component" value="Chromosome 15"/>
</dbReference>
<dbReference type="InterPro" id="IPR026737">
    <property type="entry name" value="GOLGA6L"/>
</dbReference>
<dbReference type="PANTHER" id="PTHR23143:SF31">
    <property type="entry name" value="GOLGIN SUBFAMILY A MEMBER 6-LIKE PROTEIN 1-RELATED"/>
    <property type="match status" value="1"/>
</dbReference>
<dbReference type="PANTHER" id="PTHR23143">
    <property type="entry name" value="TRICHOHYALIN-RELATED"/>
    <property type="match status" value="1"/>
</dbReference>